<accession>A7FVY8</accession>
<evidence type="ECO:0000255" key="1">
    <source>
        <dbReference type="HAMAP-Rule" id="MF_01343"/>
    </source>
</evidence>
<evidence type="ECO:0000256" key="2">
    <source>
        <dbReference type="SAM" id="MobiDB-lite"/>
    </source>
</evidence>
<evidence type="ECO:0000305" key="3"/>
<name>RS15_CLOB1</name>
<reference key="1">
    <citation type="journal article" date="2007" name="PLoS ONE">
        <title>Analysis of the neurotoxin complex genes in Clostridium botulinum A1-A4 and B1 strains: BoNT/A3, /Ba4 and /B1 clusters are located within plasmids.</title>
        <authorList>
            <person name="Smith T.J."/>
            <person name="Hill K.K."/>
            <person name="Foley B.T."/>
            <person name="Detter J.C."/>
            <person name="Munk A.C."/>
            <person name="Bruce D.C."/>
            <person name="Doggett N.A."/>
            <person name="Smith L.A."/>
            <person name="Marks J.D."/>
            <person name="Xie G."/>
            <person name="Brettin T.S."/>
        </authorList>
    </citation>
    <scope>NUCLEOTIDE SEQUENCE [LARGE SCALE GENOMIC DNA]</scope>
    <source>
        <strain>ATCC 19397 / Type A</strain>
    </source>
</reference>
<sequence>MDKAKKQELMAKHARHEGDTGSPEVQIALLTERINHLNSHLKEHKKDHHSRRGLLMMVGKRRGLLNYLMREDIERYRAIIKELGLRK</sequence>
<proteinExistence type="inferred from homology"/>
<gene>
    <name evidence="1" type="primary">rpsO</name>
    <name type="ordered locus">CLB_2277</name>
</gene>
<keyword id="KW-0687">Ribonucleoprotein</keyword>
<keyword id="KW-0689">Ribosomal protein</keyword>
<keyword id="KW-0694">RNA-binding</keyword>
<keyword id="KW-0699">rRNA-binding</keyword>
<protein>
    <recommendedName>
        <fullName evidence="1">Small ribosomal subunit protein uS15</fullName>
    </recommendedName>
    <alternativeName>
        <fullName evidence="3">30S ribosomal protein S15</fullName>
    </alternativeName>
</protein>
<organism>
    <name type="scientific">Clostridium botulinum (strain ATCC 19397 / Type A)</name>
    <dbReference type="NCBI Taxonomy" id="441770"/>
    <lineage>
        <taxon>Bacteria</taxon>
        <taxon>Bacillati</taxon>
        <taxon>Bacillota</taxon>
        <taxon>Clostridia</taxon>
        <taxon>Eubacteriales</taxon>
        <taxon>Clostridiaceae</taxon>
        <taxon>Clostridium</taxon>
    </lineage>
</organism>
<feature type="chain" id="PRO_0000354183" description="Small ribosomal subunit protein uS15">
    <location>
        <begin position="1"/>
        <end position="87"/>
    </location>
</feature>
<feature type="region of interest" description="Disordered" evidence="2">
    <location>
        <begin position="1"/>
        <end position="23"/>
    </location>
</feature>
<feature type="compositionally biased region" description="Basic and acidic residues" evidence="2">
    <location>
        <begin position="1"/>
        <end position="19"/>
    </location>
</feature>
<dbReference type="EMBL" id="CP000726">
    <property type="protein sequence ID" value="ABS35324.1"/>
    <property type="status" value="ALT_INIT"/>
    <property type="molecule type" value="Genomic_DNA"/>
</dbReference>
<dbReference type="RefSeq" id="WP_003388351.1">
    <property type="nucleotide sequence ID" value="NC_009697.1"/>
</dbReference>
<dbReference type="SMR" id="A7FVY8"/>
<dbReference type="GeneID" id="92939166"/>
<dbReference type="KEGG" id="cba:CLB_2277"/>
<dbReference type="HOGENOM" id="CLU_148518_0_1_9"/>
<dbReference type="GO" id="GO:0022627">
    <property type="term" value="C:cytosolic small ribosomal subunit"/>
    <property type="evidence" value="ECO:0007669"/>
    <property type="project" value="TreeGrafter"/>
</dbReference>
<dbReference type="GO" id="GO:0019843">
    <property type="term" value="F:rRNA binding"/>
    <property type="evidence" value="ECO:0007669"/>
    <property type="project" value="UniProtKB-UniRule"/>
</dbReference>
<dbReference type="GO" id="GO:0003735">
    <property type="term" value="F:structural constituent of ribosome"/>
    <property type="evidence" value="ECO:0007669"/>
    <property type="project" value="InterPro"/>
</dbReference>
<dbReference type="GO" id="GO:0006412">
    <property type="term" value="P:translation"/>
    <property type="evidence" value="ECO:0007669"/>
    <property type="project" value="UniProtKB-UniRule"/>
</dbReference>
<dbReference type="CDD" id="cd00353">
    <property type="entry name" value="Ribosomal_S15p_S13e"/>
    <property type="match status" value="1"/>
</dbReference>
<dbReference type="FunFam" id="1.10.287.10:FF:000002">
    <property type="entry name" value="30S ribosomal protein S15"/>
    <property type="match status" value="1"/>
</dbReference>
<dbReference type="Gene3D" id="6.10.250.3130">
    <property type="match status" value="1"/>
</dbReference>
<dbReference type="Gene3D" id="1.10.287.10">
    <property type="entry name" value="S15/NS1, RNA-binding"/>
    <property type="match status" value="1"/>
</dbReference>
<dbReference type="HAMAP" id="MF_01343_B">
    <property type="entry name" value="Ribosomal_uS15_B"/>
    <property type="match status" value="1"/>
</dbReference>
<dbReference type="InterPro" id="IPR000589">
    <property type="entry name" value="Ribosomal_uS15"/>
</dbReference>
<dbReference type="InterPro" id="IPR005290">
    <property type="entry name" value="Ribosomal_uS15_bac-type"/>
</dbReference>
<dbReference type="InterPro" id="IPR009068">
    <property type="entry name" value="uS15_NS1_RNA-bd_sf"/>
</dbReference>
<dbReference type="NCBIfam" id="TIGR00952">
    <property type="entry name" value="S15_bact"/>
    <property type="match status" value="1"/>
</dbReference>
<dbReference type="PANTHER" id="PTHR23321">
    <property type="entry name" value="RIBOSOMAL PROTEIN S15, BACTERIAL AND ORGANELLAR"/>
    <property type="match status" value="1"/>
</dbReference>
<dbReference type="PANTHER" id="PTHR23321:SF26">
    <property type="entry name" value="SMALL RIBOSOMAL SUBUNIT PROTEIN US15M"/>
    <property type="match status" value="1"/>
</dbReference>
<dbReference type="Pfam" id="PF00312">
    <property type="entry name" value="Ribosomal_S15"/>
    <property type="match status" value="1"/>
</dbReference>
<dbReference type="SMART" id="SM01387">
    <property type="entry name" value="Ribosomal_S15"/>
    <property type="match status" value="1"/>
</dbReference>
<dbReference type="SUPFAM" id="SSF47060">
    <property type="entry name" value="S15/NS1 RNA-binding domain"/>
    <property type="match status" value="1"/>
</dbReference>
<dbReference type="PROSITE" id="PS00362">
    <property type="entry name" value="RIBOSOMAL_S15"/>
    <property type="match status" value="1"/>
</dbReference>
<comment type="function">
    <text evidence="1">One of the primary rRNA binding proteins, it binds directly to 16S rRNA where it helps nucleate assembly of the platform of the 30S subunit by binding and bridging several RNA helices of the 16S rRNA.</text>
</comment>
<comment type="function">
    <text evidence="1">Forms an intersubunit bridge (bridge B4) with the 23S rRNA of the 50S subunit in the ribosome.</text>
</comment>
<comment type="subunit">
    <text evidence="1">Part of the 30S ribosomal subunit. Forms a bridge to the 50S subunit in the 70S ribosome, contacting the 23S rRNA.</text>
</comment>
<comment type="similarity">
    <text evidence="1">Belongs to the universal ribosomal protein uS15 family.</text>
</comment>
<comment type="sequence caution" evidence="3">
    <conflict type="erroneous initiation">
        <sequence resource="EMBL-CDS" id="ABS35324"/>
    </conflict>
</comment>